<gene>
    <name evidence="1" type="primary">nadK</name>
    <name type="ordered locus">str1457</name>
</gene>
<name>NADK_STRT1</name>
<accession>Q5LYV4</accession>
<feature type="chain" id="PRO_0000229697" description="NAD kinase">
    <location>
        <begin position="1"/>
        <end position="279"/>
    </location>
</feature>
<feature type="active site" description="Proton acceptor" evidence="1">
    <location>
        <position position="57"/>
    </location>
</feature>
<feature type="binding site" evidence="1">
    <location>
        <begin position="57"/>
        <end position="58"/>
    </location>
    <ligand>
        <name>NAD(+)</name>
        <dbReference type="ChEBI" id="CHEBI:57540"/>
    </ligand>
</feature>
<feature type="binding site" evidence="1">
    <location>
        <begin position="133"/>
        <end position="134"/>
    </location>
    <ligand>
        <name>NAD(+)</name>
        <dbReference type="ChEBI" id="CHEBI:57540"/>
    </ligand>
</feature>
<feature type="binding site" evidence="1">
    <location>
        <position position="159"/>
    </location>
    <ligand>
        <name>NAD(+)</name>
        <dbReference type="ChEBI" id="CHEBI:57540"/>
    </ligand>
</feature>
<feature type="binding site" evidence="1">
    <location>
        <position position="161"/>
    </location>
    <ligand>
        <name>NAD(+)</name>
        <dbReference type="ChEBI" id="CHEBI:57540"/>
    </ligand>
</feature>
<feature type="binding site" evidence="1">
    <location>
        <begin position="172"/>
        <end position="177"/>
    </location>
    <ligand>
        <name>NAD(+)</name>
        <dbReference type="ChEBI" id="CHEBI:57540"/>
    </ligand>
</feature>
<feature type="binding site" evidence="1">
    <location>
        <position position="196"/>
    </location>
    <ligand>
        <name>NAD(+)</name>
        <dbReference type="ChEBI" id="CHEBI:57540"/>
    </ligand>
</feature>
<sequence length="279" mass="31167">MMTQMKTSSDEMKVAIIANGKPQSRRVASKLFNAFRDDPDFYLTKKNPDVLISIGGDGMLLSAFHMYEKELARVRFVGIHTGHLGFYTDYLDSEVDQLIETLRKDSGAKISYPLLNVKLTLADGRSFTSIALNEAAIKRNEKTMAADVCLNDVLFESFRGDGLSVSTPTGSTAYNKSLGGAVLHPTIEALQLTEIASLNNRVYRTLGSPLIVPKHEKITVYPTRMGSYTLSVDNKTYINRNVKKVEFSIDQRKISFVASASHTSFWERVRESFIGDMEE</sequence>
<organism>
    <name type="scientific">Streptococcus thermophilus (strain CNRZ 1066)</name>
    <dbReference type="NCBI Taxonomy" id="299768"/>
    <lineage>
        <taxon>Bacteria</taxon>
        <taxon>Bacillati</taxon>
        <taxon>Bacillota</taxon>
        <taxon>Bacilli</taxon>
        <taxon>Lactobacillales</taxon>
        <taxon>Streptococcaceae</taxon>
        <taxon>Streptococcus</taxon>
    </lineage>
</organism>
<proteinExistence type="inferred from homology"/>
<dbReference type="EC" id="2.7.1.23" evidence="1"/>
<dbReference type="EMBL" id="CP000024">
    <property type="protein sequence ID" value="AAV62993.1"/>
    <property type="molecule type" value="Genomic_DNA"/>
</dbReference>
<dbReference type="SMR" id="Q5LYV4"/>
<dbReference type="KEGG" id="stc:str1457"/>
<dbReference type="HOGENOM" id="CLU_008831_0_3_9"/>
<dbReference type="GO" id="GO:0005737">
    <property type="term" value="C:cytoplasm"/>
    <property type="evidence" value="ECO:0007669"/>
    <property type="project" value="UniProtKB-SubCell"/>
</dbReference>
<dbReference type="GO" id="GO:0005524">
    <property type="term" value="F:ATP binding"/>
    <property type="evidence" value="ECO:0007669"/>
    <property type="project" value="UniProtKB-KW"/>
</dbReference>
<dbReference type="GO" id="GO:0046872">
    <property type="term" value="F:metal ion binding"/>
    <property type="evidence" value="ECO:0007669"/>
    <property type="project" value="UniProtKB-UniRule"/>
</dbReference>
<dbReference type="GO" id="GO:0051287">
    <property type="term" value="F:NAD binding"/>
    <property type="evidence" value="ECO:0007669"/>
    <property type="project" value="UniProtKB-ARBA"/>
</dbReference>
<dbReference type="GO" id="GO:0003951">
    <property type="term" value="F:NAD+ kinase activity"/>
    <property type="evidence" value="ECO:0007669"/>
    <property type="project" value="UniProtKB-UniRule"/>
</dbReference>
<dbReference type="GO" id="GO:0019674">
    <property type="term" value="P:NAD metabolic process"/>
    <property type="evidence" value="ECO:0007669"/>
    <property type="project" value="InterPro"/>
</dbReference>
<dbReference type="GO" id="GO:0006741">
    <property type="term" value="P:NADP biosynthetic process"/>
    <property type="evidence" value="ECO:0007669"/>
    <property type="project" value="UniProtKB-UniRule"/>
</dbReference>
<dbReference type="Gene3D" id="3.40.50.10330">
    <property type="entry name" value="Probable inorganic polyphosphate/atp-NAD kinase, domain 1"/>
    <property type="match status" value="1"/>
</dbReference>
<dbReference type="Gene3D" id="2.60.200.30">
    <property type="entry name" value="Probable inorganic polyphosphate/atp-NAD kinase, domain 2"/>
    <property type="match status" value="1"/>
</dbReference>
<dbReference type="HAMAP" id="MF_00361">
    <property type="entry name" value="NAD_kinase"/>
    <property type="match status" value="1"/>
</dbReference>
<dbReference type="InterPro" id="IPR017438">
    <property type="entry name" value="ATP-NAD_kinase_N"/>
</dbReference>
<dbReference type="InterPro" id="IPR017437">
    <property type="entry name" value="ATP-NAD_kinase_PpnK-typ_C"/>
</dbReference>
<dbReference type="InterPro" id="IPR016064">
    <property type="entry name" value="NAD/diacylglycerol_kinase_sf"/>
</dbReference>
<dbReference type="InterPro" id="IPR002504">
    <property type="entry name" value="NADK"/>
</dbReference>
<dbReference type="NCBIfam" id="NF003424">
    <property type="entry name" value="PRK04885.1"/>
    <property type="match status" value="1"/>
</dbReference>
<dbReference type="PANTHER" id="PTHR20275">
    <property type="entry name" value="NAD KINASE"/>
    <property type="match status" value="1"/>
</dbReference>
<dbReference type="PANTHER" id="PTHR20275:SF0">
    <property type="entry name" value="NAD KINASE"/>
    <property type="match status" value="1"/>
</dbReference>
<dbReference type="Pfam" id="PF01513">
    <property type="entry name" value="NAD_kinase"/>
    <property type="match status" value="1"/>
</dbReference>
<dbReference type="Pfam" id="PF20143">
    <property type="entry name" value="NAD_kinase_C"/>
    <property type="match status" value="1"/>
</dbReference>
<dbReference type="SUPFAM" id="SSF111331">
    <property type="entry name" value="NAD kinase/diacylglycerol kinase-like"/>
    <property type="match status" value="1"/>
</dbReference>
<keyword id="KW-0067">ATP-binding</keyword>
<keyword id="KW-0963">Cytoplasm</keyword>
<keyword id="KW-0418">Kinase</keyword>
<keyword id="KW-0520">NAD</keyword>
<keyword id="KW-0521">NADP</keyword>
<keyword id="KW-0547">Nucleotide-binding</keyword>
<keyword id="KW-0808">Transferase</keyword>
<comment type="function">
    <text evidence="1">Involved in the regulation of the intracellular balance of NAD and NADP, and is a key enzyme in the biosynthesis of NADP. Catalyzes specifically the phosphorylation on 2'-hydroxyl of the adenosine moiety of NAD to yield NADP.</text>
</comment>
<comment type="catalytic activity">
    <reaction evidence="1">
        <text>NAD(+) + ATP = ADP + NADP(+) + H(+)</text>
        <dbReference type="Rhea" id="RHEA:18629"/>
        <dbReference type="ChEBI" id="CHEBI:15378"/>
        <dbReference type="ChEBI" id="CHEBI:30616"/>
        <dbReference type="ChEBI" id="CHEBI:57540"/>
        <dbReference type="ChEBI" id="CHEBI:58349"/>
        <dbReference type="ChEBI" id="CHEBI:456216"/>
        <dbReference type="EC" id="2.7.1.23"/>
    </reaction>
</comment>
<comment type="cofactor">
    <cofactor evidence="1">
        <name>a divalent metal cation</name>
        <dbReference type="ChEBI" id="CHEBI:60240"/>
    </cofactor>
</comment>
<comment type="subcellular location">
    <subcellularLocation>
        <location evidence="1">Cytoplasm</location>
    </subcellularLocation>
</comment>
<comment type="similarity">
    <text evidence="1">Belongs to the NAD kinase family.</text>
</comment>
<protein>
    <recommendedName>
        <fullName evidence="1">NAD kinase</fullName>
        <ecNumber evidence="1">2.7.1.23</ecNumber>
    </recommendedName>
    <alternativeName>
        <fullName evidence="1">ATP-dependent NAD kinase</fullName>
    </alternativeName>
</protein>
<evidence type="ECO:0000255" key="1">
    <source>
        <dbReference type="HAMAP-Rule" id="MF_00361"/>
    </source>
</evidence>
<reference key="1">
    <citation type="journal article" date="2004" name="Nat. Biotechnol.">
        <title>Complete sequence and comparative genome analysis of the dairy bacterium Streptococcus thermophilus.</title>
        <authorList>
            <person name="Bolotin A."/>
            <person name="Quinquis B."/>
            <person name="Renault P."/>
            <person name="Sorokin A."/>
            <person name="Ehrlich S.D."/>
            <person name="Kulakauskas S."/>
            <person name="Lapidus A."/>
            <person name="Goltsman E."/>
            <person name="Mazur M."/>
            <person name="Pusch G.D."/>
            <person name="Fonstein M."/>
            <person name="Overbeek R."/>
            <person name="Kyprides N."/>
            <person name="Purnelle B."/>
            <person name="Prozzi D."/>
            <person name="Ngui K."/>
            <person name="Masuy D."/>
            <person name="Hancy F."/>
            <person name="Burteau S."/>
            <person name="Boutry M."/>
            <person name="Delcour J."/>
            <person name="Goffeau A."/>
            <person name="Hols P."/>
        </authorList>
    </citation>
    <scope>NUCLEOTIDE SEQUENCE [LARGE SCALE GENOMIC DNA]</scope>
    <source>
        <strain>CNRZ 1066</strain>
    </source>
</reference>